<name>MOG1_CAEEL</name>
<keyword id="KW-0067">ATP-binding</keyword>
<keyword id="KW-0217">Developmental protein</keyword>
<keyword id="KW-0347">Helicase</keyword>
<keyword id="KW-0378">Hydrolase</keyword>
<keyword id="KW-0507">mRNA processing</keyword>
<keyword id="KW-0508">mRNA splicing</keyword>
<keyword id="KW-0547">Nucleotide-binding</keyword>
<keyword id="KW-0539">Nucleus</keyword>
<keyword id="KW-1185">Reference proteome</keyword>
<evidence type="ECO:0000250" key="1"/>
<evidence type="ECO:0000255" key="2">
    <source>
        <dbReference type="PROSITE-ProRule" id="PRU00541"/>
    </source>
</evidence>
<evidence type="ECO:0000255" key="3">
    <source>
        <dbReference type="PROSITE-ProRule" id="PRU00542"/>
    </source>
</evidence>
<evidence type="ECO:0000256" key="4">
    <source>
        <dbReference type="SAM" id="MobiDB-lite"/>
    </source>
</evidence>
<evidence type="ECO:0000305" key="5"/>
<proteinExistence type="evidence at protein level"/>
<sequence length="1131" mass="129424">MSDKRADGRLEGTSDTFGGLVIKKKKVEGDSKPTEPSGKSLLGLDRLASTKREHARKRLEDDDDRGVTESVRKGIEKVHEKHRDRDDRGMKYKSRDDDRRRDRDRSERREPSSRRGWKDRSGDQTPRFKVPDTPSRMSWDQDDREGSSRKRNSWDMPTPRGERDRKRYMDSERSISSAWRSERRNRDDEKRRRHRKPEDSVRSVKEEKAEPTFHDDEERAQWEEEQKNLDREWYDNEGAFDDEYNPFNKVSDEFVEKREKQWQEKTQKPRLTVKQQAIKRENELWENNRLHRSGVVAMADELSSIFEDETDENRVTILVQNIVPPFLDGRIVFTKQAQPIIPVVDTTCDMAVSAARGSVAVRKRREVEDRKKAQDKHWELAGSKLGNLMGVKEKKDETADPEDDDSGNYKESHQFASHMKDNEAVSDFAMEKSIKQQREYLPVFACRQKMMNVIRENNVVIIVGETGSGKTTQLAQYLLEDGFGDSGLIGCTQPRRVAAMSVARRVADEMGVDLGQDVGYAIRFEDCTSEKTIIKYMTDGILLRECLGDGSLDQYSAIIMDEAHERSLNTDVLFGLLREVIAKRADLKLIVTSATMDADKFADFFGGNCPTFTIPGRTFPVELFHARTPVEDYVDAAVKQAVTIHLGGMDGDILIFMPGQEDIECTCEMIKEKLGELDEAPPLAVLPIYSQLPSDLQAKIFQRAPGGMRKAIVATNIAETSLTVDGILFVIDPGFCKMKVYNPRIGMDALSIFPVSQASANQRTGRAGRTGPGQCYRLYTERQFKDELLKSTVPEIQRTNLANVVLLLKSLGVDDLLKFHFMDAPPQDNMLNSMYQLWTLGALDNTGQLTPMGRKMVEFPLDPTLSKMLIMSAEMGCSDEVLTIVSMLSVPAIFFRPKGREEEADAKKEKFQVPESDHLTFLNVYIQWRTHKYSAKWCADNYLHVKALKKVREVRAQLKEIMQDLKLPLISNGSEWDIVRKCICSAYFHNAARLKGIGEYVNVRTGIPCFLHPTSALFGMGFMPDYVVYHELIMTAKEYMQCVTAVDAIWLAELGPMFYSIKESKQSRKELKMESVRTVETMEAEMREAQKEMERRKEESDKAFKRPESSRRVVEVGSKSARSERRKLWGL</sequence>
<accession>P34498</accession>
<dbReference type="EC" id="3.6.4.13"/>
<dbReference type="EMBL" id="AF120269">
    <property type="protein sequence ID" value="AAD13795.1"/>
    <property type="molecule type" value="mRNA"/>
</dbReference>
<dbReference type="EMBL" id="Z29560">
    <property type="protein sequence ID" value="CAA82662.1"/>
    <property type="molecule type" value="Genomic_DNA"/>
</dbReference>
<dbReference type="PIR" id="F88570">
    <property type="entry name" value="F88570"/>
</dbReference>
<dbReference type="PIR" id="S41025">
    <property type="entry name" value="S41025"/>
</dbReference>
<dbReference type="RefSeq" id="NP_499212.1">
    <property type="nucleotide sequence ID" value="NM_066811.10"/>
</dbReference>
<dbReference type="SMR" id="P34498"/>
<dbReference type="BioGRID" id="41603">
    <property type="interactions" value="12"/>
</dbReference>
<dbReference type="FunCoup" id="P34498">
    <property type="interactions" value="2961"/>
</dbReference>
<dbReference type="IntAct" id="P34498">
    <property type="interactions" value="4"/>
</dbReference>
<dbReference type="STRING" id="6239.K03H1.2.2"/>
<dbReference type="iPTMnet" id="P34498"/>
<dbReference type="PaxDb" id="6239-K03H1.2"/>
<dbReference type="PeptideAtlas" id="P34498"/>
<dbReference type="EnsemblMetazoa" id="K03H1.2.1">
    <property type="protein sequence ID" value="K03H1.2.1"/>
    <property type="gene ID" value="WBGene00003389"/>
</dbReference>
<dbReference type="GeneID" id="176409"/>
<dbReference type="KEGG" id="cel:CELE_K03H1.2"/>
<dbReference type="UCSC" id="K03H1.2.1">
    <property type="organism name" value="c. elegans"/>
</dbReference>
<dbReference type="AGR" id="WB:WBGene00003389"/>
<dbReference type="CTD" id="176409"/>
<dbReference type="WormBase" id="K03H1.2">
    <property type="protein sequence ID" value="CE01027"/>
    <property type="gene ID" value="WBGene00003389"/>
    <property type="gene designation" value="mog-1"/>
</dbReference>
<dbReference type="eggNOG" id="KOG0924">
    <property type="taxonomic scope" value="Eukaryota"/>
</dbReference>
<dbReference type="GeneTree" id="ENSGT00940000156898"/>
<dbReference type="HOGENOM" id="CLU_001832_6_2_1"/>
<dbReference type="InParanoid" id="P34498"/>
<dbReference type="OMA" id="IFHARAP"/>
<dbReference type="OrthoDB" id="10253254at2759"/>
<dbReference type="PhylomeDB" id="P34498"/>
<dbReference type="Reactome" id="R-CEL-159236">
    <property type="pathway name" value="Transport of Mature mRNA derived from an Intron-Containing Transcript"/>
</dbReference>
<dbReference type="Reactome" id="R-CEL-72163">
    <property type="pathway name" value="mRNA Splicing - Major Pathway"/>
</dbReference>
<dbReference type="Reactome" id="R-CEL-72187">
    <property type="pathway name" value="mRNA 3'-end processing"/>
</dbReference>
<dbReference type="Reactome" id="R-CEL-73856">
    <property type="pathway name" value="RNA Polymerase II Transcription Termination"/>
</dbReference>
<dbReference type="PRO" id="PR:P34498"/>
<dbReference type="Proteomes" id="UP000001940">
    <property type="component" value="Chromosome III"/>
</dbReference>
<dbReference type="Bgee" id="WBGene00003389">
    <property type="expression patterns" value="Expressed in adult organism and 4 other cell types or tissues"/>
</dbReference>
<dbReference type="GO" id="GO:0005681">
    <property type="term" value="C:spliceosomal complex"/>
    <property type="evidence" value="ECO:0000318"/>
    <property type="project" value="GO_Central"/>
</dbReference>
<dbReference type="GO" id="GO:0034458">
    <property type="term" value="F:3'-5' RNA helicase activity"/>
    <property type="evidence" value="ECO:0000318"/>
    <property type="project" value="GO_Central"/>
</dbReference>
<dbReference type="GO" id="GO:0005524">
    <property type="term" value="F:ATP binding"/>
    <property type="evidence" value="ECO:0007669"/>
    <property type="project" value="UniProtKB-KW"/>
</dbReference>
<dbReference type="GO" id="GO:0016887">
    <property type="term" value="F:ATP hydrolysis activity"/>
    <property type="evidence" value="ECO:0007669"/>
    <property type="project" value="RHEA"/>
</dbReference>
<dbReference type="GO" id="GO:0003723">
    <property type="term" value="F:RNA binding"/>
    <property type="evidence" value="ECO:0000318"/>
    <property type="project" value="GO_Central"/>
</dbReference>
<dbReference type="GO" id="GO:0040022">
    <property type="term" value="P:feminization of hermaphroditic germ-line"/>
    <property type="evidence" value="ECO:0000315"/>
    <property type="project" value="WormBase"/>
</dbReference>
<dbReference type="GO" id="GO:0000398">
    <property type="term" value="P:mRNA splicing, via spliceosome"/>
    <property type="evidence" value="ECO:0000318"/>
    <property type="project" value="GO_Central"/>
</dbReference>
<dbReference type="CDD" id="cd17983">
    <property type="entry name" value="DEXHc_DHX38"/>
    <property type="match status" value="1"/>
</dbReference>
<dbReference type="CDD" id="cd18791">
    <property type="entry name" value="SF2_C_RHA"/>
    <property type="match status" value="1"/>
</dbReference>
<dbReference type="FunFam" id="1.20.120.1080:FF:000001">
    <property type="entry name" value="Pre-mRNA-splicing factor ATP-dependent RNA helicase"/>
    <property type="match status" value="1"/>
</dbReference>
<dbReference type="FunFam" id="3.40.50.300:FF:000007">
    <property type="entry name" value="Pre-mRNA-splicing factor ATP-dependent RNA helicase"/>
    <property type="match status" value="1"/>
</dbReference>
<dbReference type="FunFam" id="3.40.50.300:FF:000615">
    <property type="entry name" value="pre-mRNA-splicing factor ATP-dependent RNA helicase DEAH7"/>
    <property type="match status" value="1"/>
</dbReference>
<dbReference type="Gene3D" id="1.20.120.1080">
    <property type="match status" value="1"/>
</dbReference>
<dbReference type="Gene3D" id="3.40.50.300">
    <property type="entry name" value="P-loop containing nucleotide triphosphate hydrolases"/>
    <property type="match status" value="2"/>
</dbReference>
<dbReference type="InterPro" id="IPR011709">
    <property type="entry name" value="DEAD-box_helicase_OB_fold"/>
</dbReference>
<dbReference type="InterPro" id="IPR011545">
    <property type="entry name" value="DEAD/DEAH_box_helicase_dom"/>
</dbReference>
<dbReference type="InterPro" id="IPR002464">
    <property type="entry name" value="DNA/RNA_helicase_DEAH_CS"/>
</dbReference>
<dbReference type="InterPro" id="IPR048333">
    <property type="entry name" value="HA2_WH"/>
</dbReference>
<dbReference type="InterPro" id="IPR007502">
    <property type="entry name" value="Helicase-assoc_dom"/>
</dbReference>
<dbReference type="InterPro" id="IPR014001">
    <property type="entry name" value="Helicase_ATP-bd"/>
</dbReference>
<dbReference type="InterPro" id="IPR001650">
    <property type="entry name" value="Helicase_C-like"/>
</dbReference>
<dbReference type="InterPro" id="IPR027417">
    <property type="entry name" value="P-loop_NTPase"/>
</dbReference>
<dbReference type="PANTHER" id="PTHR18934">
    <property type="entry name" value="ATP-DEPENDENT RNA HELICASE"/>
    <property type="match status" value="1"/>
</dbReference>
<dbReference type="PANTHER" id="PTHR18934:SF91">
    <property type="entry name" value="PRE-MRNA-SPLICING FACTOR ATP-DEPENDENT RNA HELICASE PRP16"/>
    <property type="match status" value="1"/>
</dbReference>
<dbReference type="Pfam" id="PF00270">
    <property type="entry name" value="DEAD"/>
    <property type="match status" value="1"/>
</dbReference>
<dbReference type="Pfam" id="PF21010">
    <property type="entry name" value="HA2_C"/>
    <property type="match status" value="1"/>
</dbReference>
<dbReference type="Pfam" id="PF04408">
    <property type="entry name" value="HA2_N"/>
    <property type="match status" value="1"/>
</dbReference>
<dbReference type="Pfam" id="PF00271">
    <property type="entry name" value="Helicase_C"/>
    <property type="match status" value="1"/>
</dbReference>
<dbReference type="Pfam" id="PF07717">
    <property type="entry name" value="OB_NTP_bind"/>
    <property type="match status" value="1"/>
</dbReference>
<dbReference type="SMART" id="SM00487">
    <property type="entry name" value="DEXDc"/>
    <property type="match status" value="1"/>
</dbReference>
<dbReference type="SMART" id="SM00847">
    <property type="entry name" value="HA2"/>
    <property type="match status" value="1"/>
</dbReference>
<dbReference type="SMART" id="SM00490">
    <property type="entry name" value="HELICc"/>
    <property type="match status" value="1"/>
</dbReference>
<dbReference type="SUPFAM" id="SSF52540">
    <property type="entry name" value="P-loop containing nucleoside triphosphate hydrolases"/>
    <property type="match status" value="1"/>
</dbReference>
<dbReference type="PROSITE" id="PS00690">
    <property type="entry name" value="DEAH_ATP_HELICASE"/>
    <property type="match status" value="1"/>
</dbReference>
<dbReference type="PROSITE" id="PS51192">
    <property type="entry name" value="HELICASE_ATP_BIND_1"/>
    <property type="match status" value="1"/>
</dbReference>
<dbReference type="PROSITE" id="PS51194">
    <property type="entry name" value="HELICASE_CTER"/>
    <property type="match status" value="1"/>
</dbReference>
<feature type="chain" id="PRO_0000055148" description="Probable pre-mRNA-splicing factor ATP-dependent RNA helicase mog-1">
    <location>
        <begin position="1"/>
        <end position="1131"/>
    </location>
</feature>
<feature type="domain" description="Helicase ATP-binding" evidence="2">
    <location>
        <begin position="451"/>
        <end position="614"/>
    </location>
</feature>
<feature type="domain" description="Helicase C-terminal" evidence="3">
    <location>
        <begin position="629"/>
        <end position="812"/>
    </location>
</feature>
<feature type="region of interest" description="Disordered" evidence="4">
    <location>
        <begin position="1"/>
        <end position="225"/>
    </location>
</feature>
<feature type="region of interest" description="Disordered" evidence="4">
    <location>
        <begin position="389"/>
        <end position="416"/>
    </location>
</feature>
<feature type="region of interest" description="Disordered" evidence="4">
    <location>
        <begin position="1085"/>
        <end position="1131"/>
    </location>
</feature>
<feature type="short sequence motif" description="DEAH box">
    <location>
        <begin position="561"/>
        <end position="564"/>
    </location>
</feature>
<feature type="compositionally biased region" description="Basic and acidic residues" evidence="4">
    <location>
        <begin position="1"/>
        <end position="12"/>
    </location>
</feature>
<feature type="compositionally biased region" description="Basic and acidic residues" evidence="4">
    <location>
        <begin position="65"/>
        <end position="122"/>
    </location>
</feature>
<feature type="compositionally biased region" description="Basic and acidic residues" evidence="4">
    <location>
        <begin position="139"/>
        <end position="148"/>
    </location>
</feature>
<feature type="compositionally biased region" description="Basic and acidic residues" evidence="4">
    <location>
        <begin position="160"/>
        <end position="173"/>
    </location>
</feature>
<feature type="compositionally biased region" description="Basic and acidic residues" evidence="4">
    <location>
        <begin position="180"/>
        <end position="225"/>
    </location>
</feature>
<feature type="compositionally biased region" description="Basic and acidic residues" evidence="4">
    <location>
        <begin position="407"/>
        <end position="416"/>
    </location>
</feature>
<feature type="compositionally biased region" description="Basic and acidic residues" evidence="4">
    <location>
        <begin position="1085"/>
        <end position="1114"/>
    </location>
</feature>
<feature type="compositionally biased region" description="Basic and acidic residues" evidence="4">
    <location>
        <begin position="1121"/>
        <end position="1131"/>
    </location>
</feature>
<feature type="binding site" evidence="2">
    <location>
        <begin position="464"/>
        <end position="471"/>
    </location>
    <ligand>
        <name>ATP</name>
        <dbReference type="ChEBI" id="CHEBI:30616"/>
    </ligand>
</feature>
<gene>
    <name type="primary">mog-1</name>
    <name type="ORF">K03H1.2</name>
</gene>
<reference key="1">
    <citation type="journal article" date="1999" name="Mol. Cell. Biol.">
        <title>The Caenorhabditis elegans sex determination gene mog-1 encodes a member of the DEAH-Box protein family.</title>
        <authorList>
            <person name="Puoti A."/>
            <person name="Kimble J."/>
        </authorList>
    </citation>
    <scope>NUCLEOTIDE SEQUENCE [MRNA]</scope>
    <source>
        <strain>Bristol N2</strain>
    </source>
</reference>
<reference key="2">
    <citation type="journal article" date="1994" name="Nature">
        <title>2.2 Mb of contiguous nucleotide sequence from chromosome III of C. elegans.</title>
        <authorList>
            <person name="Wilson R."/>
            <person name="Ainscough R."/>
            <person name="Anderson K."/>
            <person name="Baynes C."/>
            <person name="Berks M."/>
            <person name="Bonfield J."/>
            <person name="Burton J."/>
            <person name="Connell M."/>
            <person name="Copsey T."/>
            <person name="Cooper J."/>
            <person name="Coulson A."/>
            <person name="Craxton M."/>
            <person name="Dear S."/>
            <person name="Du Z."/>
            <person name="Durbin R."/>
            <person name="Favello A."/>
            <person name="Fraser A."/>
            <person name="Fulton L."/>
            <person name="Gardner A."/>
            <person name="Green P."/>
            <person name="Hawkins T."/>
            <person name="Hillier L."/>
            <person name="Jier M."/>
            <person name="Johnston L."/>
            <person name="Jones M."/>
            <person name="Kershaw J."/>
            <person name="Kirsten J."/>
            <person name="Laisster N."/>
            <person name="Latreille P."/>
            <person name="Lightning J."/>
            <person name="Lloyd C."/>
            <person name="Mortimore B."/>
            <person name="O'Callaghan M."/>
            <person name="Parsons J."/>
            <person name="Percy C."/>
            <person name="Rifken L."/>
            <person name="Roopra A."/>
            <person name="Saunders D."/>
            <person name="Shownkeen R."/>
            <person name="Sims M."/>
            <person name="Smaldon N."/>
            <person name="Smith A."/>
            <person name="Smith M."/>
            <person name="Sonnhammer E."/>
            <person name="Staden R."/>
            <person name="Sulston J."/>
            <person name="Thierry-Mieg J."/>
            <person name="Thomas K."/>
            <person name="Vaudin M."/>
            <person name="Vaughan K."/>
            <person name="Waterston R."/>
            <person name="Watson A."/>
            <person name="Weinstock L."/>
            <person name="Wilkinson-Sproat J."/>
            <person name="Wohldman P."/>
        </authorList>
    </citation>
    <scope>NUCLEOTIDE SEQUENCE [LARGE SCALE GENOMIC DNA]</scope>
    <source>
        <strain>Bristol N2</strain>
    </source>
</reference>
<reference key="3">
    <citation type="journal article" date="1998" name="Science">
        <title>Genome sequence of the nematode C. elegans: a platform for investigating biology.</title>
        <authorList>
            <consortium name="The C. elegans sequencing consortium"/>
        </authorList>
    </citation>
    <scope>NUCLEOTIDE SEQUENCE [LARGE SCALE GENOMIC DNA]</scope>
    <source>
        <strain>Bristol N2</strain>
    </source>
</reference>
<protein>
    <recommendedName>
        <fullName>Probable pre-mRNA-splicing factor ATP-dependent RNA helicase mog-1</fullName>
        <ecNumber>3.6.4.13</ecNumber>
    </recommendedName>
    <alternativeName>
        <fullName>Masculinization of germline protein 1</fullName>
    </alternativeName>
    <alternativeName>
        <fullName>Sex determination protein mog-1</fullName>
    </alternativeName>
</protein>
<organism>
    <name type="scientific">Caenorhabditis elegans</name>
    <dbReference type="NCBI Taxonomy" id="6239"/>
    <lineage>
        <taxon>Eukaryota</taxon>
        <taxon>Metazoa</taxon>
        <taxon>Ecdysozoa</taxon>
        <taxon>Nematoda</taxon>
        <taxon>Chromadorea</taxon>
        <taxon>Rhabditida</taxon>
        <taxon>Rhabditina</taxon>
        <taxon>Rhabditomorpha</taxon>
        <taxon>Rhabditoidea</taxon>
        <taxon>Rhabditidae</taxon>
        <taxon>Peloderinae</taxon>
        <taxon>Caenorhabditis</taxon>
    </lineage>
</organism>
<comment type="function">
    <text>Probable ATP-binding RNA helicase involved in pre-mRNA splicing.</text>
</comment>
<comment type="catalytic activity">
    <reaction>
        <text>ATP + H2O = ADP + phosphate + H(+)</text>
        <dbReference type="Rhea" id="RHEA:13065"/>
        <dbReference type="ChEBI" id="CHEBI:15377"/>
        <dbReference type="ChEBI" id="CHEBI:15378"/>
        <dbReference type="ChEBI" id="CHEBI:30616"/>
        <dbReference type="ChEBI" id="CHEBI:43474"/>
        <dbReference type="ChEBI" id="CHEBI:456216"/>
        <dbReference type="EC" id="3.6.4.13"/>
    </reaction>
</comment>
<comment type="interaction">
    <interactant intactId="EBI-3651301">
        <id>P34498</id>
    </interactant>
    <interactant intactId="EBI-319858">
        <id>Q21502</id>
        <label>mep-1</label>
    </interactant>
    <organismsDiffer>false</organismsDiffer>
    <experiments>3</experiments>
</comment>
<comment type="interaction">
    <interactant intactId="EBI-3651301">
        <id>P34498</id>
    </interactant>
    <interactant intactId="EBI-326143">
        <id>O45244</id>
        <label>mog-4</label>
    </interactant>
    <organismsDiffer>false</organismsDiffer>
    <experiments>2</experiments>
</comment>
<comment type="subcellular location">
    <subcellularLocation>
        <location evidence="1">Nucleus</location>
    </subcellularLocation>
</comment>
<comment type="similarity">
    <text evidence="5">Belongs to the DEAD box helicase family. DEAH subfamily. PRP16 sub-subfamily.</text>
</comment>